<reference key="1">
    <citation type="journal article" date="2003" name="Genome Res.">
        <title>Comparative genome analysis of Vibrio vulnificus, a marine pathogen.</title>
        <authorList>
            <person name="Chen C.-Y."/>
            <person name="Wu K.-M."/>
            <person name="Chang Y.-C."/>
            <person name="Chang C.-H."/>
            <person name="Tsai H.-C."/>
            <person name="Liao T.-L."/>
            <person name="Liu Y.-M."/>
            <person name="Chen H.-J."/>
            <person name="Shen A.B.-T."/>
            <person name="Li J.-C."/>
            <person name="Su T.-L."/>
            <person name="Shao C.-P."/>
            <person name="Lee C.-T."/>
            <person name="Hor L.-I."/>
            <person name="Tsai S.-F."/>
        </authorList>
    </citation>
    <scope>NUCLEOTIDE SEQUENCE [LARGE SCALE GENOMIC DNA]</scope>
    <source>
        <strain>YJ016</strain>
    </source>
</reference>
<gene>
    <name evidence="1" type="primary">rpoZ</name>
    <name type="ordered locus">VV0242</name>
</gene>
<feature type="chain" id="PRO_0000129012" description="DNA-directed RNA polymerase subunit omega">
    <location>
        <begin position="1"/>
        <end position="90"/>
    </location>
</feature>
<feature type="region of interest" description="Disordered" evidence="2">
    <location>
        <begin position="69"/>
        <end position="90"/>
    </location>
</feature>
<evidence type="ECO:0000255" key="1">
    <source>
        <dbReference type="HAMAP-Rule" id="MF_00366"/>
    </source>
</evidence>
<evidence type="ECO:0000256" key="2">
    <source>
        <dbReference type="SAM" id="MobiDB-lite"/>
    </source>
</evidence>
<comment type="function">
    <text evidence="1">Promotes RNA polymerase assembly. Latches the N- and C-terminal regions of the beta' subunit thereby facilitating its interaction with the beta and alpha subunits.</text>
</comment>
<comment type="catalytic activity">
    <reaction evidence="1">
        <text>RNA(n) + a ribonucleoside 5'-triphosphate = RNA(n+1) + diphosphate</text>
        <dbReference type="Rhea" id="RHEA:21248"/>
        <dbReference type="Rhea" id="RHEA-COMP:14527"/>
        <dbReference type="Rhea" id="RHEA-COMP:17342"/>
        <dbReference type="ChEBI" id="CHEBI:33019"/>
        <dbReference type="ChEBI" id="CHEBI:61557"/>
        <dbReference type="ChEBI" id="CHEBI:140395"/>
        <dbReference type="EC" id="2.7.7.6"/>
    </reaction>
</comment>
<comment type="subunit">
    <text evidence="1">The RNAP catalytic core consists of 2 alpha, 1 beta, 1 beta' and 1 omega subunit. When a sigma factor is associated with the core the holoenzyme is formed, which can initiate transcription.</text>
</comment>
<comment type="similarity">
    <text evidence="1">Belongs to the RNA polymerase subunit omega family.</text>
</comment>
<dbReference type="EC" id="2.7.7.6" evidence="1"/>
<dbReference type="EMBL" id="BA000037">
    <property type="protein sequence ID" value="BAC93006.1"/>
    <property type="molecule type" value="Genomic_DNA"/>
</dbReference>
<dbReference type="RefSeq" id="WP_011078919.1">
    <property type="nucleotide sequence ID" value="NC_005139.1"/>
</dbReference>
<dbReference type="SMR" id="Q7MPX0"/>
<dbReference type="STRING" id="672.VV93_v1c02210"/>
<dbReference type="KEGG" id="vvy:VV0242"/>
<dbReference type="eggNOG" id="COG1758">
    <property type="taxonomic scope" value="Bacteria"/>
</dbReference>
<dbReference type="HOGENOM" id="CLU_125406_5_3_6"/>
<dbReference type="Proteomes" id="UP000002675">
    <property type="component" value="Chromosome I"/>
</dbReference>
<dbReference type="GO" id="GO:0000428">
    <property type="term" value="C:DNA-directed RNA polymerase complex"/>
    <property type="evidence" value="ECO:0007669"/>
    <property type="project" value="UniProtKB-KW"/>
</dbReference>
<dbReference type="GO" id="GO:0003677">
    <property type="term" value="F:DNA binding"/>
    <property type="evidence" value="ECO:0007669"/>
    <property type="project" value="UniProtKB-UniRule"/>
</dbReference>
<dbReference type="GO" id="GO:0003899">
    <property type="term" value="F:DNA-directed RNA polymerase activity"/>
    <property type="evidence" value="ECO:0007669"/>
    <property type="project" value="UniProtKB-UniRule"/>
</dbReference>
<dbReference type="GO" id="GO:0006351">
    <property type="term" value="P:DNA-templated transcription"/>
    <property type="evidence" value="ECO:0007669"/>
    <property type="project" value="UniProtKB-UniRule"/>
</dbReference>
<dbReference type="FunFam" id="3.90.940.10:FF:000001">
    <property type="entry name" value="DNA-directed RNA polymerase subunit omega"/>
    <property type="match status" value="1"/>
</dbReference>
<dbReference type="Gene3D" id="3.90.940.10">
    <property type="match status" value="1"/>
</dbReference>
<dbReference type="HAMAP" id="MF_00366">
    <property type="entry name" value="RNApol_bact_RpoZ"/>
    <property type="match status" value="1"/>
</dbReference>
<dbReference type="InterPro" id="IPR003716">
    <property type="entry name" value="DNA-dir_RNA_pol_omega"/>
</dbReference>
<dbReference type="InterPro" id="IPR006110">
    <property type="entry name" value="Pol_omega/Rpo6/RPB6"/>
</dbReference>
<dbReference type="InterPro" id="IPR036161">
    <property type="entry name" value="RPB6/omega-like_sf"/>
</dbReference>
<dbReference type="NCBIfam" id="TIGR00690">
    <property type="entry name" value="rpoZ"/>
    <property type="match status" value="1"/>
</dbReference>
<dbReference type="PANTHER" id="PTHR34476">
    <property type="entry name" value="DNA-DIRECTED RNA POLYMERASE SUBUNIT OMEGA"/>
    <property type="match status" value="1"/>
</dbReference>
<dbReference type="PANTHER" id="PTHR34476:SF1">
    <property type="entry name" value="DNA-DIRECTED RNA POLYMERASE SUBUNIT OMEGA"/>
    <property type="match status" value="1"/>
</dbReference>
<dbReference type="Pfam" id="PF01192">
    <property type="entry name" value="RNA_pol_Rpb6"/>
    <property type="match status" value="1"/>
</dbReference>
<dbReference type="SMART" id="SM01409">
    <property type="entry name" value="RNA_pol_Rpb6"/>
    <property type="match status" value="1"/>
</dbReference>
<dbReference type="SUPFAM" id="SSF63562">
    <property type="entry name" value="RPB6/omega subunit-like"/>
    <property type="match status" value="1"/>
</dbReference>
<organism>
    <name type="scientific">Vibrio vulnificus (strain YJ016)</name>
    <dbReference type="NCBI Taxonomy" id="196600"/>
    <lineage>
        <taxon>Bacteria</taxon>
        <taxon>Pseudomonadati</taxon>
        <taxon>Pseudomonadota</taxon>
        <taxon>Gammaproteobacteria</taxon>
        <taxon>Vibrionales</taxon>
        <taxon>Vibrionaceae</taxon>
        <taxon>Vibrio</taxon>
    </lineage>
</organism>
<keyword id="KW-0240">DNA-directed RNA polymerase</keyword>
<keyword id="KW-0548">Nucleotidyltransferase</keyword>
<keyword id="KW-0804">Transcription</keyword>
<keyword id="KW-0808">Transferase</keyword>
<sequence>MARVTVQDAVEKVGNRFDLVLIAARRARQMQTGGKDSLVPEENDKPTVIALREIEEGLITKEVLDARERQEQQEQEAAELAAVSSIARNR</sequence>
<accession>Q7MPX0</accession>
<proteinExistence type="inferred from homology"/>
<protein>
    <recommendedName>
        <fullName evidence="1">DNA-directed RNA polymerase subunit omega</fullName>
        <shortName evidence="1">RNAP omega subunit</shortName>
        <ecNumber evidence="1">2.7.7.6</ecNumber>
    </recommendedName>
    <alternativeName>
        <fullName evidence="1">RNA polymerase omega subunit</fullName>
    </alternativeName>
    <alternativeName>
        <fullName evidence="1">Transcriptase subunit omega</fullName>
    </alternativeName>
</protein>
<name>RPOZ_VIBVY</name>